<dbReference type="EMBL" id="CP000879">
    <property type="protein sequence ID" value="ABX32522.1"/>
    <property type="molecule type" value="Genomic_DNA"/>
</dbReference>
<dbReference type="RefSeq" id="WP_012209619.1">
    <property type="nucleotide sequence ID" value="NC_010003.1"/>
</dbReference>
<dbReference type="SMR" id="A9BGU1"/>
<dbReference type="STRING" id="403833.Pmob_1833"/>
<dbReference type="KEGG" id="pmo:Pmob_1833"/>
<dbReference type="eggNOG" id="COG0227">
    <property type="taxonomic scope" value="Bacteria"/>
</dbReference>
<dbReference type="HOGENOM" id="CLU_064548_7_0_0"/>
<dbReference type="OrthoDB" id="9805609at2"/>
<dbReference type="Proteomes" id="UP000000789">
    <property type="component" value="Chromosome"/>
</dbReference>
<dbReference type="GO" id="GO:1990904">
    <property type="term" value="C:ribonucleoprotein complex"/>
    <property type="evidence" value="ECO:0007669"/>
    <property type="project" value="UniProtKB-KW"/>
</dbReference>
<dbReference type="GO" id="GO:0005840">
    <property type="term" value="C:ribosome"/>
    <property type="evidence" value="ECO:0007669"/>
    <property type="project" value="UniProtKB-KW"/>
</dbReference>
<dbReference type="GO" id="GO:0003735">
    <property type="term" value="F:structural constituent of ribosome"/>
    <property type="evidence" value="ECO:0007669"/>
    <property type="project" value="InterPro"/>
</dbReference>
<dbReference type="GO" id="GO:0006412">
    <property type="term" value="P:translation"/>
    <property type="evidence" value="ECO:0007669"/>
    <property type="project" value="UniProtKB-UniRule"/>
</dbReference>
<dbReference type="Gene3D" id="2.20.150.30">
    <property type="match status" value="1"/>
</dbReference>
<dbReference type="Gene3D" id="2.30.170.40">
    <property type="entry name" value="Ribosomal protein L28/L24"/>
    <property type="match status" value="1"/>
</dbReference>
<dbReference type="HAMAP" id="MF_00373">
    <property type="entry name" value="Ribosomal_bL28"/>
    <property type="match status" value="1"/>
</dbReference>
<dbReference type="InterPro" id="IPR050096">
    <property type="entry name" value="Bacterial_rp_bL28"/>
</dbReference>
<dbReference type="InterPro" id="IPR026569">
    <property type="entry name" value="Ribosomal_bL28"/>
</dbReference>
<dbReference type="InterPro" id="IPR034704">
    <property type="entry name" value="Ribosomal_bL28/bL31-like_sf"/>
</dbReference>
<dbReference type="InterPro" id="IPR001383">
    <property type="entry name" value="Ribosomal_bL28_bact-type"/>
</dbReference>
<dbReference type="InterPro" id="IPR037147">
    <property type="entry name" value="Ribosomal_bL28_sf"/>
</dbReference>
<dbReference type="NCBIfam" id="TIGR00009">
    <property type="entry name" value="L28"/>
    <property type="match status" value="1"/>
</dbReference>
<dbReference type="PANTHER" id="PTHR39080">
    <property type="entry name" value="50S RIBOSOMAL PROTEIN L28"/>
    <property type="match status" value="1"/>
</dbReference>
<dbReference type="PANTHER" id="PTHR39080:SF1">
    <property type="entry name" value="LARGE RIBOSOMAL SUBUNIT PROTEIN BL28A"/>
    <property type="match status" value="1"/>
</dbReference>
<dbReference type="Pfam" id="PF00830">
    <property type="entry name" value="Ribosomal_L28"/>
    <property type="match status" value="1"/>
</dbReference>
<dbReference type="SUPFAM" id="SSF143800">
    <property type="entry name" value="L28p-like"/>
    <property type="match status" value="1"/>
</dbReference>
<protein>
    <recommendedName>
        <fullName evidence="1">Large ribosomal subunit protein bL28</fullName>
    </recommendedName>
    <alternativeName>
        <fullName evidence="2">50S ribosomal protein L28</fullName>
    </alternativeName>
</protein>
<feature type="chain" id="PRO_1000079857" description="Large ribosomal subunit protein bL28">
    <location>
        <begin position="1"/>
        <end position="63"/>
    </location>
</feature>
<sequence>MARKCEICGKSPATGNTVAKSKVTTRRVWKPNLQKIRVVTDEGTVRRMYVCTKCLKSGKVQKA</sequence>
<name>RL28_PETMO</name>
<keyword id="KW-0687">Ribonucleoprotein</keyword>
<keyword id="KW-0689">Ribosomal protein</keyword>
<evidence type="ECO:0000255" key="1">
    <source>
        <dbReference type="HAMAP-Rule" id="MF_00373"/>
    </source>
</evidence>
<evidence type="ECO:0000305" key="2"/>
<proteinExistence type="inferred from homology"/>
<reference key="1">
    <citation type="submission" date="2007-11" db="EMBL/GenBank/DDBJ databases">
        <title>Complete sequence of Petroga mobilis SJ95.</title>
        <authorList>
            <consortium name="US DOE Joint Genome Institute"/>
            <person name="Copeland A."/>
            <person name="Lucas S."/>
            <person name="Lapidus A."/>
            <person name="Barry K."/>
            <person name="Glavina del Rio T."/>
            <person name="Dalin E."/>
            <person name="Tice H."/>
            <person name="Pitluck S."/>
            <person name="Meincke L."/>
            <person name="Brettin T."/>
            <person name="Bruce D."/>
            <person name="Detter J.C."/>
            <person name="Han C."/>
            <person name="Kuske C.R."/>
            <person name="Schmutz J."/>
            <person name="Larimer F."/>
            <person name="Land M."/>
            <person name="Hauser L."/>
            <person name="Kyrpides N."/>
            <person name="Mikhailova N."/>
            <person name="Noll K."/>
            <person name="Richardson P."/>
        </authorList>
    </citation>
    <scope>NUCLEOTIDE SEQUENCE [LARGE SCALE GENOMIC DNA]</scope>
    <source>
        <strain>DSM 10674 / SJ95</strain>
    </source>
</reference>
<gene>
    <name evidence="1" type="primary">rpmB</name>
    <name type="ordered locus">Pmob_1833</name>
</gene>
<comment type="similarity">
    <text evidence="1">Belongs to the bacterial ribosomal protein bL28 family.</text>
</comment>
<organism>
    <name type="scientific">Petrotoga mobilis (strain DSM 10674 / SJ95)</name>
    <dbReference type="NCBI Taxonomy" id="403833"/>
    <lineage>
        <taxon>Bacteria</taxon>
        <taxon>Thermotogati</taxon>
        <taxon>Thermotogota</taxon>
        <taxon>Thermotogae</taxon>
        <taxon>Petrotogales</taxon>
        <taxon>Petrotogaceae</taxon>
        <taxon>Petrotoga</taxon>
    </lineage>
</organism>
<accession>A9BGU1</accession>